<proteinExistence type="evidence at protein level"/>
<organism>
    <name type="scientific">Lactobacillus acidophilus (strain ATCC 700396 / NCK56 / N2 / NCFM)</name>
    <dbReference type="NCBI Taxonomy" id="272621"/>
    <lineage>
        <taxon>Bacteria</taxon>
        <taxon>Bacillati</taxon>
        <taxon>Bacillota</taxon>
        <taxon>Bacilli</taxon>
        <taxon>Lactobacillales</taxon>
        <taxon>Lactobacillaceae</taxon>
        <taxon>Lactobacillus</taxon>
    </lineage>
</organism>
<accession>Q5FKD1</accession>
<dbReference type="EMBL" id="CP000033">
    <property type="protein sequence ID" value="AAV42843.1"/>
    <property type="molecule type" value="Genomic_DNA"/>
</dbReference>
<dbReference type="RefSeq" id="YP_193874.1">
    <property type="nucleotide sequence ID" value="NC_006814.3"/>
</dbReference>
<dbReference type="SMR" id="Q5FKD1"/>
<dbReference type="STRING" id="272621.LBA0993"/>
<dbReference type="KEGG" id="lac:LBA0993"/>
<dbReference type="PATRIC" id="fig|272621.13.peg.943"/>
<dbReference type="eggNOG" id="COG0239">
    <property type="taxonomic scope" value="Bacteria"/>
</dbReference>
<dbReference type="HOGENOM" id="CLU_114342_2_3_9"/>
<dbReference type="OrthoDB" id="9815830at2"/>
<dbReference type="BioCyc" id="LACI272621:G1G49-993-MONOMER"/>
<dbReference type="Proteomes" id="UP000006381">
    <property type="component" value="Chromosome"/>
</dbReference>
<dbReference type="GO" id="GO:0005886">
    <property type="term" value="C:plasma membrane"/>
    <property type="evidence" value="ECO:0007669"/>
    <property type="project" value="UniProtKB-SubCell"/>
</dbReference>
<dbReference type="GO" id="GO:0062054">
    <property type="term" value="F:fluoride channel activity"/>
    <property type="evidence" value="ECO:0007669"/>
    <property type="project" value="UniProtKB-UniRule"/>
</dbReference>
<dbReference type="GO" id="GO:0046872">
    <property type="term" value="F:metal ion binding"/>
    <property type="evidence" value="ECO:0007669"/>
    <property type="project" value="UniProtKB-KW"/>
</dbReference>
<dbReference type="GO" id="GO:0140114">
    <property type="term" value="P:cellular detoxification of fluoride"/>
    <property type="evidence" value="ECO:0007669"/>
    <property type="project" value="UniProtKB-UniRule"/>
</dbReference>
<dbReference type="HAMAP" id="MF_00454">
    <property type="entry name" value="FluC"/>
    <property type="match status" value="1"/>
</dbReference>
<dbReference type="InterPro" id="IPR003691">
    <property type="entry name" value="FluC"/>
</dbReference>
<dbReference type="NCBIfam" id="NF010816">
    <property type="entry name" value="PRK14220.1"/>
    <property type="match status" value="1"/>
</dbReference>
<dbReference type="PANTHER" id="PTHR28259">
    <property type="entry name" value="FLUORIDE EXPORT PROTEIN 1-RELATED"/>
    <property type="match status" value="1"/>
</dbReference>
<dbReference type="PANTHER" id="PTHR28259:SF16">
    <property type="entry name" value="FLUORIDE-SPECIFIC ION CHANNEL FLUC 2"/>
    <property type="match status" value="1"/>
</dbReference>
<dbReference type="Pfam" id="PF02537">
    <property type="entry name" value="CRCB"/>
    <property type="match status" value="1"/>
</dbReference>
<sequence>MNFLLAGIGASIGAMLRYAITNYGKKHWEWIGNKFSNLPTPTLFINLTGAFILGFIFGIKTNVFIYAIVGTGVLGGYTTFSTMNTELVELYKSKNYRGFIFYALSSYLGGLILVFVGYYLAILF</sequence>
<reference key="1">
    <citation type="journal article" date="2005" name="Proc. Natl. Acad. Sci. U.S.A.">
        <title>Complete genome sequence of the probiotic lactic acid bacterium Lactobacillus acidophilus NCFM.</title>
        <authorList>
            <person name="Altermann E."/>
            <person name="Russell W.M."/>
            <person name="Azcarate-Peril M.A."/>
            <person name="Barrangou R."/>
            <person name="Buck B.L."/>
            <person name="McAuliffe O."/>
            <person name="Souther N."/>
            <person name="Dobson A."/>
            <person name="Duong T."/>
            <person name="Callanan M."/>
            <person name="Lick S."/>
            <person name="Hamrick A."/>
            <person name="Cano R."/>
            <person name="Klaenhammer T.R."/>
        </authorList>
    </citation>
    <scope>NUCLEOTIDE SEQUENCE [LARGE SCALE GENOMIC DNA]</scope>
    <source>
        <strain>ATCC 700396 / NCK56 / N2 / NCFM</strain>
    </source>
</reference>
<reference key="2">
    <citation type="journal article" date="2013" name="Elife">
        <title>A family of fluoride-specific ion channels with dual-topology architecture.</title>
        <authorList>
            <person name="Stockbridge R.B."/>
            <person name="Robertson J.L."/>
            <person name="Kolmakova-Partensky L."/>
            <person name="Miller C."/>
        </authorList>
    </citation>
    <scope>FUNCTION</scope>
    <scope>TRANSPORTER ACTIVITY</scope>
    <scope>SUBUNIT</scope>
    <scope>SUBCELLULAR LOCATION</scope>
    <scope>TOPOLOGY</scope>
</reference>
<keyword id="KW-1003">Cell membrane</keyword>
<keyword id="KW-0407">Ion channel</keyword>
<keyword id="KW-0406">Ion transport</keyword>
<keyword id="KW-0472">Membrane</keyword>
<keyword id="KW-0479">Metal-binding</keyword>
<keyword id="KW-1185">Reference proteome</keyword>
<keyword id="KW-0915">Sodium</keyword>
<keyword id="KW-0812">Transmembrane</keyword>
<keyword id="KW-1133">Transmembrane helix</keyword>
<keyword id="KW-0813">Transport</keyword>
<comment type="function">
    <text evidence="1 2">Fluoride-specific ion channel (PubMed:23991286). Important for reducing fluoride concentration in the cell, thus reducing its toxicity (By similarity).</text>
</comment>
<comment type="catalytic activity">
    <reaction evidence="1 2">
        <text>fluoride(in) = fluoride(out)</text>
        <dbReference type="Rhea" id="RHEA:76159"/>
        <dbReference type="ChEBI" id="CHEBI:17051"/>
    </reaction>
    <physiologicalReaction direction="left-to-right" evidence="1 4">
        <dbReference type="Rhea" id="RHEA:76160"/>
    </physiologicalReaction>
</comment>
<comment type="activity regulation">
    <text evidence="1">Na(+) is not transported, but it plays an essential structural role and its presence is essential for fluoride channel function.</text>
</comment>
<comment type="subunit">
    <text evidence="2">Heterodimer composed of FluC1 and FluC2 (PubMed:23991286). Neither FluC1 nor FluC2 alone catalyzes fluoride efflux from liposomes (PubMed:23991286).</text>
</comment>
<comment type="subcellular location">
    <subcellularLocation>
        <location evidence="1">Cell membrane</location>
        <topology evidence="1">Multi-pass membrane protein</topology>
    </subcellularLocation>
    <text evidence="2">Exhibits a dual-topology architecture: one of the subunits is predicted to insert into the membrane with the termini in the cytoplasm, and the second should be oppositely oriented.</text>
</comment>
<comment type="similarity">
    <text evidence="1">Belongs to the fluoride channel Fluc/FEX (TC 1.A.43) family.</text>
</comment>
<feature type="chain" id="PRO_0000110113" description="Fluoride-specific ion channel FluC 2">
    <location>
        <begin position="1"/>
        <end position="124"/>
    </location>
</feature>
<feature type="transmembrane region" description="Helical" evidence="1">
    <location>
        <begin position="1"/>
        <end position="21"/>
    </location>
</feature>
<feature type="transmembrane region" description="Helical" evidence="1">
    <location>
        <begin position="36"/>
        <end position="58"/>
    </location>
</feature>
<feature type="transmembrane region" description="Helical" evidence="1">
    <location>
        <begin position="63"/>
        <end position="85"/>
    </location>
</feature>
<feature type="transmembrane region" description="Helical" evidence="1">
    <location>
        <begin position="104"/>
        <end position="124"/>
    </location>
</feature>
<feature type="binding site" evidence="1">
    <location>
        <position position="75"/>
    </location>
    <ligand>
        <name>Na(+)</name>
        <dbReference type="ChEBI" id="CHEBI:29101"/>
        <note>structural</note>
    </ligand>
</feature>
<feature type="binding site" evidence="1">
    <location>
        <position position="78"/>
    </location>
    <ligand>
        <name>Na(+)</name>
        <dbReference type="ChEBI" id="CHEBI:29101"/>
        <note>structural</note>
    </ligand>
</feature>
<gene>
    <name evidence="1 4" type="primary">fluC2</name>
    <name evidence="1" type="synonym">crcB2</name>
    <name type="ordered locus">LBA0993</name>
</gene>
<protein>
    <recommendedName>
        <fullName evidence="1 3">Fluoride-specific ion channel FluC 2</fullName>
    </recommendedName>
</protein>
<evidence type="ECO:0000255" key="1">
    <source>
        <dbReference type="HAMAP-Rule" id="MF_00454"/>
    </source>
</evidence>
<evidence type="ECO:0000269" key="2">
    <source>
    </source>
</evidence>
<evidence type="ECO:0000303" key="3">
    <source>
    </source>
</evidence>
<evidence type="ECO:0000305" key="4">
    <source>
    </source>
</evidence>
<name>FLUC2_LACAC</name>